<evidence type="ECO:0000250" key="1"/>
<evidence type="ECO:0000250" key="2">
    <source>
        <dbReference type="UniProtKB" id="Q99627"/>
    </source>
</evidence>
<evidence type="ECO:0000255" key="3">
    <source>
        <dbReference type="PROSITE-ProRule" id="PRU01185"/>
    </source>
</evidence>
<evidence type="ECO:0000305" key="4"/>
<comment type="function">
    <text evidence="1">Component of the COP9 signalosome complex (CSN), a complex involved in various cellular and developmental processes. The CSN complex is an essential regulator of the ubiquitin (Ubl) conjugation pathway by mediating the deneddylation of the cullin subunits of E3 ligase complexes, leading to modify the Ubl ligase activity (By similarity).</text>
</comment>
<comment type="subunit">
    <text evidence="2">Component of the CSN complex, probably composed of cops1, cops2, cops3, cops4, cops5, cops6, cops7, cops8 and cops9.</text>
</comment>
<comment type="subcellular location">
    <subcellularLocation>
        <location evidence="1">Cytoplasm</location>
    </subcellularLocation>
    <subcellularLocation>
        <location evidence="1">Nucleus</location>
    </subcellularLocation>
</comment>
<comment type="similarity">
    <text evidence="4">Belongs to the CSN8 family.</text>
</comment>
<comment type="sequence caution" evidence="4">
    <conflict type="erroneous initiation">
        <sequence resource="EMBL-CDS" id="AAH72840"/>
    </conflict>
</comment>
<proteinExistence type="evidence at transcript level"/>
<accession>Q6GQA6</accession>
<name>CSN8_XENLA</name>
<keyword id="KW-0963">Cytoplasm</keyword>
<keyword id="KW-0539">Nucleus</keyword>
<keyword id="KW-1185">Reference proteome</keyword>
<keyword id="KW-0736">Signalosome</keyword>
<feature type="chain" id="PRO_0000121012" description="COP9 signalosome complex subunit 8">
    <location>
        <begin position="1"/>
        <end position="195"/>
    </location>
</feature>
<feature type="domain" description="PCI" evidence="3">
    <location>
        <begin position="10"/>
        <end position="183"/>
    </location>
</feature>
<gene>
    <name type="primary">csn8</name>
</gene>
<organism>
    <name type="scientific">Xenopus laevis</name>
    <name type="common">African clawed frog</name>
    <dbReference type="NCBI Taxonomy" id="8355"/>
    <lineage>
        <taxon>Eukaryota</taxon>
        <taxon>Metazoa</taxon>
        <taxon>Chordata</taxon>
        <taxon>Craniata</taxon>
        <taxon>Vertebrata</taxon>
        <taxon>Euteleostomi</taxon>
        <taxon>Amphibia</taxon>
        <taxon>Batrachia</taxon>
        <taxon>Anura</taxon>
        <taxon>Pipoidea</taxon>
        <taxon>Pipidae</taxon>
        <taxon>Xenopodinae</taxon>
        <taxon>Xenopus</taxon>
        <taxon>Xenopus</taxon>
    </lineage>
</organism>
<sequence>MKLSESVMAQNSVSFQKLQEQCEEQELEAPGGIASPQVYNQLLALYLLHNDLNNARYLWKRIPSAIKSSHSELGGIWEVGQKIWQRDFPGIYTSISAYQWSENIQQIMEAVRDATQQRAFGLVSQAYTSISADDFAAFVGLPVEEAVKGVLEQGWQADSATGMVMPKKPDSAPLSLIPNEQQLARLTDYVAFLEN</sequence>
<dbReference type="EMBL" id="BC072840">
    <property type="protein sequence ID" value="AAH72840.1"/>
    <property type="status" value="ALT_INIT"/>
    <property type="molecule type" value="mRNA"/>
</dbReference>
<dbReference type="SMR" id="Q6GQA6"/>
<dbReference type="DNASU" id="443917"/>
<dbReference type="GeneID" id="443917"/>
<dbReference type="KEGG" id="xla:443917"/>
<dbReference type="AGR" id="Xenbase:XB-GENE-6078417"/>
<dbReference type="CTD" id="443917"/>
<dbReference type="Xenbase" id="XB-GENE-6078417">
    <property type="gene designation" value="cops8.S"/>
</dbReference>
<dbReference type="OMA" id="TIVQPCK"/>
<dbReference type="OrthoDB" id="5351233at2759"/>
<dbReference type="Proteomes" id="UP000186698">
    <property type="component" value="Chromosome 9_10S"/>
</dbReference>
<dbReference type="Bgee" id="443917">
    <property type="expression patterns" value="Expressed in ovary and 19 other cell types or tissues"/>
</dbReference>
<dbReference type="GO" id="GO:0008180">
    <property type="term" value="C:COP9 signalosome"/>
    <property type="evidence" value="ECO:0000318"/>
    <property type="project" value="GO_Central"/>
</dbReference>
<dbReference type="GO" id="GO:0005737">
    <property type="term" value="C:cytoplasm"/>
    <property type="evidence" value="ECO:0007669"/>
    <property type="project" value="UniProtKB-SubCell"/>
</dbReference>
<dbReference type="GO" id="GO:0010387">
    <property type="term" value="P:COP9 signalosome assembly"/>
    <property type="evidence" value="ECO:0007669"/>
    <property type="project" value="InterPro"/>
</dbReference>
<dbReference type="GO" id="GO:0000338">
    <property type="term" value="P:protein deneddylation"/>
    <property type="evidence" value="ECO:0007669"/>
    <property type="project" value="InterPro"/>
</dbReference>
<dbReference type="FunFam" id="1.25.40.990:FF:000011">
    <property type="entry name" value="COP9 signalosome complex subunit 8-like Protein"/>
    <property type="match status" value="1"/>
</dbReference>
<dbReference type="InterPro" id="IPR033205">
    <property type="entry name" value="COP9_CSN8"/>
</dbReference>
<dbReference type="InterPro" id="IPR033464">
    <property type="entry name" value="CSN8_PSD8_EIF3K"/>
</dbReference>
<dbReference type="InterPro" id="IPR000717">
    <property type="entry name" value="PCI_dom"/>
</dbReference>
<dbReference type="PANTHER" id="PTHR13339">
    <property type="entry name" value="COP9 SIGNALOSOME COMPLEX SUBUNIT 8"/>
    <property type="match status" value="1"/>
</dbReference>
<dbReference type="PANTHER" id="PTHR13339:SF0">
    <property type="entry name" value="COP9 SIGNALOSOME COMPLEX SUBUNIT 8"/>
    <property type="match status" value="1"/>
</dbReference>
<dbReference type="Pfam" id="PF10075">
    <property type="entry name" value="CSN8_PSD8_EIF3K"/>
    <property type="match status" value="1"/>
</dbReference>
<dbReference type="PROSITE" id="PS50250">
    <property type="entry name" value="PCI"/>
    <property type="match status" value="1"/>
</dbReference>
<protein>
    <recommendedName>
        <fullName>COP9 signalosome complex subunit 8</fullName>
        <shortName>Signalosome subunit 8</shortName>
    </recommendedName>
</protein>
<reference key="1">
    <citation type="submission" date="2004-06" db="EMBL/GenBank/DDBJ databases">
        <authorList>
            <consortium name="NIH - Xenopus Gene Collection (XGC) project"/>
        </authorList>
    </citation>
    <scope>NUCLEOTIDE SEQUENCE [LARGE SCALE MRNA]</scope>
    <source>
        <tissue>Embryo</tissue>
    </source>
</reference>